<sequence>MRILLSNDDGVHAPGIQTLAKALREFADVQVVAPDRNRSGASNSLTLESSLRTFTFENGDIAVQMGTPTDCVYLGVNALMRPRPDIVVSGINAGPNLGDDVIYSGTVAAAMEGRHLGFPALAVSLDGHKHYDTAAAVTCSILRALCKEPLRTGRILNINVPDLPLDQIKGIRVTRCGTRHPADQVIPQQDPRGNTLYWIGPPGGKCDAGPGTDFAAVDDGYVSITPLHVDLTAHSAQDVVSDWLNSVGVGTQW</sequence>
<reference key="1">
    <citation type="journal article" date="2009" name="J. Bacteriol.">
        <title>Complete genome sequence and comparative genome analysis of enteropathogenic Escherichia coli O127:H6 strain E2348/69.</title>
        <authorList>
            <person name="Iguchi A."/>
            <person name="Thomson N.R."/>
            <person name="Ogura Y."/>
            <person name="Saunders D."/>
            <person name="Ooka T."/>
            <person name="Henderson I.R."/>
            <person name="Harris D."/>
            <person name="Asadulghani M."/>
            <person name="Kurokawa K."/>
            <person name="Dean P."/>
            <person name="Kenny B."/>
            <person name="Quail M.A."/>
            <person name="Thurston S."/>
            <person name="Dougan G."/>
            <person name="Hayashi T."/>
            <person name="Parkhill J."/>
            <person name="Frankel G."/>
        </authorList>
    </citation>
    <scope>NUCLEOTIDE SEQUENCE [LARGE SCALE GENOMIC DNA]</scope>
    <source>
        <strain>E2348/69 / EPEC</strain>
    </source>
</reference>
<name>SURE_ECO27</name>
<feature type="chain" id="PRO_1000196598" description="5'/3'-nucleotidase SurE">
    <location>
        <begin position="1"/>
        <end position="253"/>
    </location>
</feature>
<feature type="binding site" evidence="1">
    <location>
        <position position="8"/>
    </location>
    <ligand>
        <name>a divalent metal cation</name>
        <dbReference type="ChEBI" id="CHEBI:60240"/>
    </ligand>
</feature>
<feature type="binding site" evidence="1">
    <location>
        <position position="9"/>
    </location>
    <ligand>
        <name>a divalent metal cation</name>
        <dbReference type="ChEBI" id="CHEBI:60240"/>
    </ligand>
</feature>
<feature type="binding site" evidence="1">
    <location>
        <position position="39"/>
    </location>
    <ligand>
        <name>a divalent metal cation</name>
        <dbReference type="ChEBI" id="CHEBI:60240"/>
    </ligand>
</feature>
<feature type="binding site" evidence="1">
    <location>
        <position position="92"/>
    </location>
    <ligand>
        <name>a divalent metal cation</name>
        <dbReference type="ChEBI" id="CHEBI:60240"/>
    </ligand>
</feature>
<evidence type="ECO:0000255" key="1">
    <source>
        <dbReference type="HAMAP-Rule" id="MF_00060"/>
    </source>
</evidence>
<gene>
    <name evidence="1" type="primary">surE</name>
    <name type="ordered locus">E2348C_3014</name>
</gene>
<comment type="function">
    <text evidence="1">Nucleotidase with a broad substrate specificity as it can dephosphorylate various ribo- and deoxyribonucleoside 5'-monophosphates and ribonucleoside 3'-monophosphates with highest affinity to 3'-AMP. Also hydrolyzes polyphosphate (exopolyphosphatase activity) with the preference for short-chain-length substrates (P20-25). Might be involved in the regulation of dNTP and NTP pools, and in the turnover of 3'-mononucleotides produced by numerous intracellular RNases (T1, T2, and F) during the degradation of various RNAs.</text>
</comment>
<comment type="catalytic activity">
    <reaction evidence="1">
        <text>a ribonucleoside 5'-phosphate + H2O = a ribonucleoside + phosphate</text>
        <dbReference type="Rhea" id="RHEA:12484"/>
        <dbReference type="ChEBI" id="CHEBI:15377"/>
        <dbReference type="ChEBI" id="CHEBI:18254"/>
        <dbReference type="ChEBI" id="CHEBI:43474"/>
        <dbReference type="ChEBI" id="CHEBI:58043"/>
        <dbReference type="EC" id="3.1.3.5"/>
    </reaction>
</comment>
<comment type="catalytic activity">
    <reaction evidence="1">
        <text>a ribonucleoside 3'-phosphate + H2O = a ribonucleoside + phosphate</text>
        <dbReference type="Rhea" id="RHEA:10144"/>
        <dbReference type="ChEBI" id="CHEBI:13197"/>
        <dbReference type="ChEBI" id="CHEBI:15377"/>
        <dbReference type="ChEBI" id="CHEBI:18254"/>
        <dbReference type="ChEBI" id="CHEBI:43474"/>
        <dbReference type="EC" id="3.1.3.6"/>
    </reaction>
</comment>
<comment type="catalytic activity">
    <reaction evidence="1">
        <text>[phosphate](n) + H2O = [phosphate](n-1) + phosphate + H(+)</text>
        <dbReference type="Rhea" id="RHEA:21528"/>
        <dbReference type="Rhea" id="RHEA-COMP:9859"/>
        <dbReference type="Rhea" id="RHEA-COMP:14279"/>
        <dbReference type="ChEBI" id="CHEBI:15377"/>
        <dbReference type="ChEBI" id="CHEBI:15378"/>
        <dbReference type="ChEBI" id="CHEBI:16838"/>
        <dbReference type="ChEBI" id="CHEBI:43474"/>
        <dbReference type="EC" id="3.6.1.11"/>
    </reaction>
</comment>
<comment type="cofactor">
    <cofactor evidence="1">
        <name>a divalent metal cation</name>
        <dbReference type="ChEBI" id="CHEBI:60240"/>
    </cofactor>
    <text evidence="1">Binds 1 divalent metal cation per subunit.</text>
</comment>
<comment type="subcellular location">
    <subcellularLocation>
        <location evidence="1">Cytoplasm</location>
    </subcellularLocation>
</comment>
<comment type="similarity">
    <text evidence="1">Belongs to the SurE nucleotidase family.</text>
</comment>
<protein>
    <recommendedName>
        <fullName evidence="1">5'/3'-nucleotidase SurE</fullName>
        <ecNumber evidence="1">3.1.3.5</ecNumber>
        <ecNumber evidence="1">3.1.3.6</ecNumber>
    </recommendedName>
    <alternativeName>
        <fullName evidence="1">Exopolyphosphatase</fullName>
        <ecNumber evidence="1">3.6.1.11</ecNumber>
    </alternativeName>
    <alternativeName>
        <fullName evidence="1">Nucleoside monophosphate phosphohydrolase</fullName>
    </alternativeName>
</protein>
<dbReference type="EC" id="3.1.3.5" evidence="1"/>
<dbReference type="EC" id="3.1.3.6" evidence="1"/>
<dbReference type="EC" id="3.6.1.11" evidence="1"/>
<dbReference type="EMBL" id="FM180568">
    <property type="protein sequence ID" value="CAS10562.1"/>
    <property type="molecule type" value="Genomic_DNA"/>
</dbReference>
<dbReference type="RefSeq" id="WP_001374596.1">
    <property type="nucleotide sequence ID" value="NC_011601.1"/>
</dbReference>
<dbReference type="SMR" id="B7UHG3"/>
<dbReference type="KEGG" id="ecg:E2348C_3014"/>
<dbReference type="HOGENOM" id="CLU_045192_1_2_6"/>
<dbReference type="Proteomes" id="UP000008205">
    <property type="component" value="Chromosome"/>
</dbReference>
<dbReference type="GO" id="GO:0005737">
    <property type="term" value="C:cytoplasm"/>
    <property type="evidence" value="ECO:0007669"/>
    <property type="project" value="UniProtKB-SubCell"/>
</dbReference>
<dbReference type="GO" id="GO:0008254">
    <property type="term" value="F:3'-nucleotidase activity"/>
    <property type="evidence" value="ECO:0007669"/>
    <property type="project" value="UniProtKB-UniRule"/>
</dbReference>
<dbReference type="GO" id="GO:0008253">
    <property type="term" value="F:5'-nucleotidase activity"/>
    <property type="evidence" value="ECO:0007669"/>
    <property type="project" value="UniProtKB-UniRule"/>
</dbReference>
<dbReference type="GO" id="GO:0004309">
    <property type="term" value="F:exopolyphosphatase activity"/>
    <property type="evidence" value="ECO:0007669"/>
    <property type="project" value="UniProtKB-UniRule"/>
</dbReference>
<dbReference type="GO" id="GO:0046872">
    <property type="term" value="F:metal ion binding"/>
    <property type="evidence" value="ECO:0007669"/>
    <property type="project" value="UniProtKB-UniRule"/>
</dbReference>
<dbReference type="GO" id="GO:0000166">
    <property type="term" value="F:nucleotide binding"/>
    <property type="evidence" value="ECO:0007669"/>
    <property type="project" value="UniProtKB-KW"/>
</dbReference>
<dbReference type="FunFam" id="3.40.1210.10:FF:000001">
    <property type="entry name" value="5'/3'-nucleotidase SurE"/>
    <property type="match status" value="1"/>
</dbReference>
<dbReference type="Gene3D" id="3.40.1210.10">
    <property type="entry name" value="Survival protein SurE-like phosphatase/nucleotidase"/>
    <property type="match status" value="1"/>
</dbReference>
<dbReference type="HAMAP" id="MF_00060">
    <property type="entry name" value="SurE"/>
    <property type="match status" value="1"/>
</dbReference>
<dbReference type="InterPro" id="IPR030048">
    <property type="entry name" value="SurE"/>
</dbReference>
<dbReference type="InterPro" id="IPR002828">
    <property type="entry name" value="SurE-like_Pase/nucleotidase"/>
</dbReference>
<dbReference type="InterPro" id="IPR036523">
    <property type="entry name" value="SurE-like_sf"/>
</dbReference>
<dbReference type="NCBIfam" id="NF001488">
    <property type="entry name" value="PRK00346.1-1"/>
    <property type="match status" value="1"/>
</dbReference>
<dbReference type="NCBIfam" id="NF001489">
    <property type="entry name" value="PRK00346.1-3"/>
    <property type="match status" value="1"/>
</dbReference>
<dbReference type="NCBIfam" id="NF001490">
    <property type="entry name" value="PRK00346.1-4"/>
    <property type="match status" value="1"/>
</dbReference>
<dbReference type="NCBIfam" id="TIGR00087">
    <property type="entry name" value="surE"/>
    <property type="match status" value="1"/>
</dbReference>
<dbReference type="PANTHER" id="PTHR30457">
    <property type="entry name" value="5'-NUCLEOTIDASE SURE"/>
    <property type="match status" value="1"/>
</dbReference>
<dbReference type="PANTHER" id="PTHR30457:SF12">
    <property type="entry name" value="5'_3'-NUCLEOTIDASE SURE"/>
    <property type="match status" value="1"/>
</dbReference>
<dbReference type="Pfam" id="PF01975">
    <property type="entry name" value="SurE"/>
    <property type="match status" value="1"/>
</dbReference>
<dbReference type="SUPFAM" id="SSF64167">
    <property type="entry name" value="SurE-like"/>
    <property type="match status" value="1"/>
</dbReference>
<keyword id="KW-0963">Cytoplasm</keyword>
<keyword id="KW-0378">Hydrolase</keyword>
<keyword id="KW-0479">Metal-binding</keyword>
<keyword id="KW-0547">Nucleotide-binding</keyword>
<keyword id="KW-1185">Reference proteome</keyword>
<proteinExistence type="inferred from homology"/>
<accession>B7UHG3</accession>
<organism>
    <name type="scientific">Escherichia coli O127:H6 (strain E2348/69 / EPEC)</name>
    <dbReference type="NCBI Taxonomy" id="574521"/>
    <lineage>
        <taxon>Bacteria</taxon>
        <taxon>Pseudomonadati</taxon>
        <taxon>Pseudomonadota</taxon>
        <taxon>Gammaproteobacteria</taxon>
        <taxon>Enterobacterales</taxon>
        <taxon>Enterobacteriaceae</taxon>
        <taxon>Escherichia</taxon>
    </lineage>
</organism>